<sequence length="183" mass="20940">MDIDPYKEFGASVELLSFLPSDFFPSVRDLLDTASALYRDALESPEHCTPNHTALRQAILCWGELMTLASWVGNNLEDPAARDLVVNYVNTNMGLKIRQLLWFHISCLTFGRETVLEYLVSFGVWIRTPPAYRPPNAPILSTLPETTVVRRRGRSPRRRTPSPRRRRSQSPRRRRSQSPASQC</sequence>
<protein>
    <recommendedName>
        <fullName evidence="1">Capsid protein</fullName>
    </recommendedName>
    <alternativeName>
        <fullName evidence="1">Core antigen</fullName>
    </alternativeName>
    <alternativeName>
        <fullName evidence="1">Core protein</fullName>
    </alternativeName>
    <alternativeName>
        <fullName evidence="1">HBcAg</fullName>
    </alternativeName>
    <alternativeName>
        <fullName evidence="1">p21.5</fullName>
    </alternativeName>
</protein>
<dbReference type="EMBL" id="X69798">
    <property type="status" value="NOT_ANNOTATED_CDS"/>
    <property type="molecule type" value="Genomic_DNA"/>
</dbReference>
<dbReference type="SMR" id="P0C6I4"/>
<dbReference type="Proteomes" id="UP000008284">
    <property type="component" value="Segment"/>
</dbReference>
<dbReference type="GO" id="GO:0043657">
    <property type="term" value="C:host cell"/>
    <property type="evidence" value="ECO:0007669"/>
    <property type="project" value="GOC"/>
</dbReference>
<dbReference type="GO" id="GO:0030430">
    <property type="term" value="C:host cell cytoplasm"/>
    <property type="evidence" value="ECO:0007669"/>
    <property type="project" value="UniProtKB-SubCell"/>
</dbReference>
<dbReference type="GO" id="GO:0039619">
    <property type="term" value="C:T=4 icosahedral viral capsid"/>
    <property type="evidence" value="ECO:0007669"/>
    <property type="project" value="UniProtKB-UniRule"/>
</dbReference>
<dbReference type="GO" id="GO:0003677">
    <property type="term" value="F:DNA binding"/>
    <property type="evidence" value="ECO:0007669"/>
    <property type="project" value="UniProtKB-UniRule"/>
</dbReference>
<dbReference type="GO" id="GO:0003723">
    <property type="term" value="F:RNA binding"/>
    <property type="evidence" value="ECO:0007669"/>
    <property type="project" value="UniProtKB-UniRule"/>
</dbReference>
<dbReference type="GO" id="GO:0005198">
    <property type="term" value="F:structural molecule activity"/>
    <property type="evidence" value="ECO:0007669"/>
    <property type="project" value="UniProtKB-UniRule"/>
</dbReference>
<dbReference type="GO" id="GO:0075521">
    <property type="term" value="P:microtubule-dependent intracellular transport of viral material towards nucleus"/>
    <property type="evidence" value="ECO:0007669"/>
    <property type="project" value="UniProtKB-UniRule"/>
</dbReference>
<dbReference type="GO" id="GO:0046718">
    <property type="term" value="P:symbiont entry into host cell"/>
    <property type="evidence" value="ECO:0007669"/>
    <property type="project" value="UniProtKB-UniRule"/>
</dbReference>
<dbReference type="GO" id="GO:0075732">
    <property type="term" value="P:viral penetration into host nucleus"/>
    <property type="evidence" value="ECO:0007669"/>
    <property type="project" value="UniProtKB-UniRule"/>
</dbReference>
<dbReference type="FunFam" id="1.10.4090.10:FF:000001">
    <property type="entry name" value="Capsid protein"/>
    <property type="match status" value="1"/>
</dbReference>
<dbReference type="Gene3D" id="1.10.4090.10">
    <property type="entry name" value="Viral capsid, core domain supefamily, Hepatitis B virus"/>
    <property type="match status" value="1"/>
</dbReference>
<dbReference type="HAMAP" id="MF_04076">
    <property type="entry name" value="HBV_HBEAG"/>
    <property type="match status" value="1"/>
</dbReference>
<dbReference type="InterPro" id="IPR002006">
    <property type="entry name" value="Hepatitis_core"/>
</dbReference>
<dbReference type="InterPro" id="IPR036459">
    <property type="entry name" value="Viral_capsid_core_dom_sf_HBV"/>
</dbReference>
<dbReference type="Pfam" id="PF00906">
    <property type="entry name" value="Hepatitis_core"/>
    <property type="match status" value="3"/>
</dbReference>
<dbReference type="SUPFAM" id="SSF47852">
    <property type="entry name" value="Hepatitis B viral capsid (hbcag)"/>
    <property type="match status" value="1"/>
</dbReference>
<accession>P0C6I4</accession>
<organism>
    <name type="scientific">Hepatitis B virus genotype F2 (isolate Brazil/w4B)</name>
    <name type="common">HBV-F</name>
    <dbReference type="NCBI Taxonomy" id="45410"/>
    <lineage>
        <taxon>Viruses</taxon>
        <taxon>Riboviria</taxon>
        <taxon>Pararnavirae</taxon>
        <taxon>Artverviricota</taxon>
        <taxon>Revtraviricetes</taxon>
        <taxon>Blubervirales</taxon>
        <taxon>Hepadnaviridae</taxon>
        <taxon>Orthohepadnavirus</taxon>
        <taxon>Hepatitis B virus</taxon>
    </lineage>
</organism>
<evidence type="ECO:0000255" key="1">
    <source>
        <dbReference type="HAMAP-Rule" id="MF_04076"/>
    </source>
</evidence>
<evidence type="ECO:0000256" key="2">
    <source>
        <dbReference type="SAM" id="MobiDB-lite"/>
    </source>
</evidence>
<keyword id="KW-0024">Alternative initiation</keyword>
<keyword id="KW-0167">Capsid protein</keyword>
<keyword id="KW-1176">Cytoplasmic inwards viral transport</keyword>
<keyword id="KW-0238">DNA-binding</keyword>
<keyword id="KW-1035">Host cytoplasm</keyword>
<keyword id="KW-0945">Host-virus interaction</keyword>
<keyword id="KW-1177">Microtubular inwards viral transport</keyword>
<keyword id="KW-0597">Phosphoprotein</keyword>
<keyword id="KW-0677">Repeat</keyword>
<keyword id="KW-0694">RNA-binding</keyword>
<keyword id="KW-1144">T=4 icosahedral capsid protein</keyword>
<keyword id="KW-1163">Viral penetration into host nucleus</keyword>
<keyword id="KW-0946">Virion</keyword>
<keyword id="KW-1160">Virus entry into host cell</keyword>
<feature type="chain" id="PRO_0000324374" description="Capsid protein">
    <location>
        <begin position="1"/>
        <end position="183"/>
    </location>
</feature>
<feature type="repeat" description="1; half-length">
    <location>
        <begin position="155"/>
        <end position="161"/>
    </location>
</feature>
<feature type="repeat" description="2">
    <location>
        <begin position="162"/>
        <end position="169"/>
    </location>
</feature>
<feature type="repeat" description="3">
    <location>
        <begin position="170"/>
        <end position="177"/>
    </location>
</feature>
<feature type="region of interest" description="Disordered" evidence="2">
    <location>
        <begin position="136"/>
        <end position="183"/>
    </location>
</feature>
<feature type="region of interest" description="3 X 8 AA repeats of S-P-R-R-R-[PR]-S-Q">
    <location>
        <begin position="155"/>
        <end position="177"/>
    </location>
</feature>
<feature type="region of interest" description="RNA binding" evidence="1">
    <location>
        <begin position="177"/>
        <end position="183"/>
    </location>
</feature>
<feature type="short sequence motif" description="Bipartite nuclear localization signal" evidence="1">
    <location>
        <begin position="158"/>
        <end position="175"/>
    </location>
</feature>
<feature type="compositionally biased region" description="Basic residues" evidence="2">
    <location>
        <begin position="149"/>
        <end position="176"/>
    </location>
</feature>
<feature type="modified residue" description="Phosphoserine; by host" evidence="1">
    <location>
        <position position="155"/>
    </location>
</feature>
<feature type="modified residue" description="Phosphoserine; by host" evidence="1">
    <location>
        <position position="162"/>
    </location>
</feature>
<feature type="modified residue" description="Phosphoserine; by host" evidence="1">
    <location>
        <position position="170"/>
    </location>
</feature>
<name>CAPSD_HBVF1</name>
<proteinExistence type="inferred from homology"/>
<reference key="1">
    <citation type="journal article" date="1993" name="J. Gen. Virol.">
        <title>Identification of a new hepatitis B virus (HBV) genotype from Brazil that expresses HBV surface antigen subtype adw4.</title>
        <authorList>
            <person name="Naumann H."/>
            <person name="Schaefer S."/>
            <person name="Yoshida C.F.T."/>
            <person name="Gaspar A.M.C."/>
            <person name="Repp R."/>
            <person name="Gerlich W.H."/>
        </authorList>
    </citation>
    <scope>NUCLEOTIDE SEQUENCE [GENOMIC DNA]</scope>
</reference>
<comment type="function">
    <text evidence="1">Self assembles to form an icosahedral capsid. Most capsids appear to be large particles with an icosahedral symmetry of T=4 and consist of 240 copies of capsid protein, though a fraction forms smaller T=3 particles consisting of 180 capsid proteins. Entering capsids are transported along microtubules to the nucleus. Phosphorylation of the capsid is thought to induce exposure of nuclear localization signal in the C-terminal portion of the capsid protein that allows binding to the nuclear pore complex via the importin (karyopherin-) alpha and beta. Capsids are imported in intact form through the nuclear pore into the nuclear basket, where it probably binds NUP153. Only capsids that contain the mature viral genome can release the viral DNA and capsid protein into the nucleoplasm. Immature capsids get stuck in the basket. Capsids encapsulate the pre-genomic RNA and the P protein. Pre-genomic RNA is reverse-transcribed into DNA while the capsid is still in the cytoplasm. The capsid can then either be directed to the nucleus, providing more genomes for transcription, or bud through the endoplasmic reticulum to provide new virions.</text>
</comment>
<comment type="subunit">
    <text evidence="1">Homodimerizes, then multimerizes. Interacts with cytosol exposed regions of viral L glycoprotein present in the reticulum-to-Golgi compartment. Interacts with human FLNB. Phosphorylated form interacts with host importin alpha; this interaction depends on the exposure of the NLS, which itself depends upon genome maturation and/or phosphorylation of the capsid protein. Interacts with host NUP153.</text>
</comment>
<comment type="subcellular location">
    <subcellularLocation>
        <location evidence="1">Virion</location>
    </subcellularLocation>
    <subcellularLocation>
        <location evidence="1">Host cytoplasm</location>
    </subcellularLocation>
</comment>
<comment type="alternative products">
    <event type="alternative initiation"/>
    <isoform>
        <id>P0C6I4-1</id>
        <name>Capsid protein</name>
        <sequence type="displayed"/>
    </isoform>
    <isoform>
        <id>Q05495-1</id>
        <name>External core antigen</name>
        <sequence type="external"/>
    </isoform>
</comment>
<comment type="PTM">
    <text evidence="1">Phosphorylated by host SRPK1, SRPK2, and maybe protein kinase C or GAPDH. Phosphorylation is critical for pregenomic RNA packaging. Protein kinase C phosphorylation is stimulated by HBx protein and may play a role in transport of the viral genome to the nucleus at the late step during the viral replication cycle.</text>
</comment>
<comment type="similarity">
    <text evidence="1">Belongs to the orthohepadnavirus core antigen family.</text>
</comment>
<gene>
    <name evidence="1" type="primary">C</name>
</gene>
<organismHost>
    <name type="scientific">Homo sapiens</name>
    <name type="common">Human</name>
    <dbReference type="NCBI Taxonomy" id="9606"/>
</organismHost>
<organismHost>
    <name type="scientific">Pan troglodytes</name>
    <name type="common">Chimpanzee</name>
    <dbReference type="NCBI Taxonomy" id="9598"/>
</organismHost>